<protein>
    <recommendedName>
        <fullName evidence="1">Beta-ketoacyl-[acyl-carrier-protein] synthase III</fullName>
        <shortName evidence="1">Beta-ketoacyl-ACP synthase III</shortName>
        <shortName evidence="1">KAS III</shortName>
        <ecNumber evidence="1">2.3.1.180</ecNumber>
    </recommendedName>
    <alternativeName>
        <fullName evidence="1">3-oxoacyl-[acyl-carrier-protein] synthase 3</fullName>
    </alternativeName>
    <alternativeName>
        <fullName evidence="1">3-oxoacyl-[acyl-carrier-protein] synthase III</fullName>
    </alternativeName>
</protein>
<evidence type="ECO:0000255" key="1">
    <source>
        <dbReference type="HAMAP-Rule" id="MF_01815"/>
    </source>
</evidence>
<reference key="1">
    <citation type="journal article" date="2006" name="J. Bacteriol.">
        <title>Comparative genomic evidence for a close relationship between the dimorphic prosthecate bacteria Hyphomonas neptunium and Caulobacter crescentus.</title>
        <authorList>
            <person name="Badger J.H."/>
            <person name="Hoover T.R."/>
            <person name="Brun Y.V."/>
            <person name="Weiner R.M."/>
            <person name="Laub M.T."/>
            <person name="Alexandre G."/>
            <person name="Mrazek J."/>
            <person name="Ren Q."/>
            <person name="Paulsen I.T."/>
            <person name="Nelson K.E."/>
            <person name="Khouri H.M."/>
            <person name="Radune D."/>
            <person name="Sosa J."/>
            <person name="Dodson R.J."/>
            <person name="Sullivan S.A."/>
            <person name="Rosovitz M.J."/>
            <person name="Madupu R."/>
            <person name="Brinkac L.M."/>
            <person name="Durkin A.S."/>
            <person name="Daugherty S.C."/>
            <person name="Kothari S.P."/>
            <person name="Giglio M.G."/>
            <person name="Zhou L."/>
            <person name="Haft D.H."/>
            <person name="Selengut J.D."/>
            <person name="Davidsen T.M."/>
            <person name="Yang Q."/>
            <person name="Zafar N."/>
            <person name="Ward N.L."/>
        </authorList>
    </citation>
    <scope>NUCLEOTIDE SEQUENCE [LARGE SCALE GENOMIC DNA]</scope>
    <source>
        <strain>ATCC 15444</strain>
    </source>
</reference>
<proteinExistence type="inferred from homology"/>
<comment type="function">
    <text evidence="1">Catalyzes the condensation reaction of fatty acid synthesis by the addition to an acyl acceptor of two carbons from malonyl-ACP. Catalyzes the first condensation reaction which initiates fatty acid synthesis and may therefore play a role in governing the total rate of fatty acid production. Possesses both acetoacetyl-ACP synthase and acetyl transacylase activities. Its substrate specificity determines the biosynthesis of branched-chain and/or straight-chain of fatty acids.</text>
</comment>
<comment type="catalytic activity">
    <reaction evidence="1">
        <text>malonyl-[ACP] + acetyl-CoA + H(+) = 3-oxobutanoyl-[ACP] + CO2 + CoA</text>
        <dbReference type="Rhea" id="RHEA:12080"/>
        <dbReference type="Rhea" id="RHEA-COMP:9623"/>
        <dbReference type="Rhea" id="RHEA-COMP:9625"/>
        <dbReference type="ChEBI" id="CHEBI:15378"/>
        <dbReference type="ChEBI" id="CHEBI:16526"/>
        <dbReference type="ChEBI" id="CHEBI:57287"/>
        <dbReference type="ChEBI" id="CHEBI:57288"/>
        <dbReference type="ChEBI" id="CHEBI:78449"/>
        <dbReference type="ChEBI" id="CHEBI:78450"/>
        <dbReference type="EC" id="2.3.1.180"/>
    </reaction>
</comment>
<comment type="pathway">
    <text evidence="1">Lipid metabolism; fatty acid biosynthesis.</text>
</comment>
<comment type="subunit">
    <text evidence="1">Homodimer.</text>
</comment>
<comment type="subcellular location">
    <subcellularLocation>
        <location evidence="1">Cytoplasm</location>
    </subcellularLocation>
</comment>
<comment type="domain">
    <text evidence="1">The last Arg residue of the ACP-binding site is essential for the weak association between ACP/AcpP and FabH.</text>
</comment>
<comment type="similarity">
    <text evidence="1">Belongs to the thiolase-like superfamily. FabH family.</text>
</comment>
<feature type="chain" id="PRO_1000056368" description="Beta-ketoacyl-[acyl-carrier-protein] synthase III">
    <location>
        <begin position="1"/>
        <end position="323"/>
    </location>
</feature>
<feature type="region of interest" description="ACP-binding" evidence="1">
    <location>
        <begin position="251"/>
        <end position="255"/>
    </location>
</feature>
<feature type="active site" evidence="1">
    <location>
        <position position="114"/>
    </location>
</feature>
<feature type="active site" evidence="1">
    <location>
        <position position="250"/>
    </location>
</feature>
<feature type="active site" evidence="1">
    <location>
        <position position="280"/>
    </location>
</feature>
<accession>Q0C312</accession>
<sequence length="323" mass="34173">MGRRSFIRGTGSYLPERVLTNDELSEMVETTDAWIQERTGIKKRHVAADGELTSDIAVHAARRALEAAGMQASEIDLIVLATTTPDQTFPATATAVQAKLGTGPGAAFDVQAVCSGFLFALATADSLMKQGLFHKALVIGAETFTRIIDWSDRGTCVLFGDGGGAIVLECVEWDGADDAGVITHHVRTDGTKSNLLYVDGGVSSTGTIGHVRMEGNKVFKHAVTNISAAIEAVLTETGLTSADIDWFVPHQANKRILDGVAKKMSIPEEKVVITVSEHANTSAASIPLALDHVVRSGRAKPGDLILSEAMGGGFSWGASLFRL</sequence>
<keyword id="KW-0012">Acyltransferase</keyword>
<keyword id="KW-0963">Cytoplasm</keyword>
<keyword id="KW-0275">Fatty acid biosynthesis</keyword>
<keyword id="KW-0276">Fatty acid metabolism</keyword>
<keyword id="KW-0444">Lipid biosynthesis</keyword>
<keyword id="KW-0443">Lipid metabolism</keyword>
<keyword id="KW-0511">Multifunctional enzyme</keyword>
<keyword id="KW-1185">Reference proteome</keyword>
<keyword id="KW-0808">Transferase</keyword>
<dbReference type="EC" id="2.3.1.180" evidence="1"/>
<dbReference type="EMBL" id="CP000158">
    <property type="protein sequence ID" value="ABI77101.1"/>
    <property type="molecule type" value="Genomic_DNA"/>
</dbReference>
<dbReference type="RefSeq" id="WP_011646181.1">
    <property type="nucleotide sequence ID" value="NC_008358.1"/>
</dbReference>
<dbReference type="SMR" id="Q0C312"/>
<dbReference type="STRING" id="228405.HNE_1162"/>
<dbReference type="KEGG" id="hne:HNE_1162"/>
<dbReference type="eggNOG" id="COG0332">
    <property type="taxonomic scope" value="Bacteria"/>
</dbReference>
<dbReference type="HOGENOM" id="CLU_039592_3_1_5"/>
<dbReference type="UniPathway" id="UPA00094"/>
<dbReference type="Proteomes" id="UP000001959">
    <property type="component" value="Chromosome"/>
</dbReference>
<dbReference type="GO" id="GO:0005737">
    <property type="term" value="C:cytoplasm"/>
    <property type="evidence" value="ECO:0007669"/>
    <property type="project" value="UniProtKB-SubCell"/>
</dbReference>
<dbReference type="GO" id="GO:0004315">
    <property type="term" value="F:3-oxoacyl-[acyl-carrier-protein] synthase activity"/>
    <property type="evidence" value="ECO:0007669"/>
    <property type="project" value="InterPro"/>
</dbReference>
<dbReference type="GO" id="GO:0033818">
    <property type="term" value="F:beta-ketoacyl-acyl-carrier-protein synthase III activity"/>
    <property type="evidence" value="ECO:0007669"/>
    <property type="project" value="UniProtKB-UniRule"/>
</dbReference>
<dbReference type="GO" id="GO:0006633">
    <property type="term" value="P:fatty acid biosynthetic process"/>
    <property type="evidence" value="ECO:0007669"/>
    <property type="project" value="UniProtKB-UniRule"/>
</dbReference>
<dbReference type="GO" id="GO:0044550">
    <property type="term" value="P:secondary metabolite biosynthetic process"/>
    <property type="evidence" value="ECO:0007669"/>
    <property type="project" value="TreeGrafter"/>
</dbReference>
<dbReference type="CDD" id="cd00830">
    <property type="entry name" value="KAS_III"/>
    <property type="match status" value="1"/>
</dbReference>
<dbReference type="FunFam" id="3.40.47.10:FF:000004">
    <property type="entry name" value="3-oxoacyl-[acyl-carrier-protein] synthase 3"/>
    <property type="match status" value="1"/>
</dbReference>
<dbReference type="Gene3D" id="3.40.47.10">
    <property type="match status" value="1"/>
</dbReference>
<dbReference type="HAMAP" id="MF_01815">
    <property type="entry name" value="FabH"/>
    <property type="match status" value="1"/>
</dbReference>
<dbReference type="InterPro" id="IPR013747">
    <property type="entry name" value="ACP_syn_III_C"/>
</dbReference>
<dbReference type="InterPro" id="IPR013751">
    <property type="entry name" value="ACP_syn_III_N"/>
</dbReference>
<dbReference type="InterPro" id="IPR004655">
    <property type="entry name" value="FabH"/>
</dbReference>
<dbReference type="InterPro" id="IPR016039">
    <property type="entry name" value="Thiolase-like"/>
</dbReference>
<dbReference type="NCBIfam" id="TIGR00747">
    <property type="entry name" value="fabH"/>
    <property type="match status" value="1"/>
</dbReference>
<dbReference type="NCBIfam" id="NF006829">
    <property type="entry name" value="PRK09352.1"/>
    <property type="match status" value="1"/>
</dbReference>
<dbReference type="PANTHER" id="PTHR34069">
    <property type="entry name" value="3-OXOACYL-[ACYL-CARRIER-PROTEIN] SYNTHASE 3"/>
    <property type="match status" value="1"/>
</dbReference>
<dbReference type="PANTHER" id="PTHR34069:SF2">
    <property type="entry name" value="BETA-KETOACYL-[ACYL-CARRIER-PROTEIN] SYNTHASE III"/>
    <property type="match status" value="1"/>
</dbReference>
<dbReference type="Pfam" id="PF08545">
    <property type="entry name" value="ACP_syn_III"/>
    <property type="match status" value="1"/>
</dbReference>
<dbReference type="Pfam" id="PF08541">
    <property type="entry name" value="ACP_syn_III_C"/>
    <property type="match status" value="1"/>
</dbReference>
<dbReference type="SUPFAM" id="SSF53901">
    <property type="entry name" value="Thiolase-like"/>
    <property type="match status" value="1"/>
</dbReference>
<gene>
    <name evidence="1" type="primary">fabH</name>
    <name type="ordered locus">HNE_1162</name>
</gene>
<organism>
    <name type="scientific">Hyphomonas neptunium (strain ATCC 15444)</name>
    <dbReference type="NCBI Taxonomy" id="228405"/>
    <lineage>
        <taxon>Bacteria</taxon>
        <taxon>Pseudomonadati</taxon>
        <taxon>Pseudomonadota</taxon>
        <taxon>Alphaproteobacteria</taxon>
        <taxon>Hyphomonadales</taxon>
        <taxon>Hyphomonadaceae</taxon>
        <taxon>Hyphomonas</taxon>
    </lineage>
</organism>
<name>FABH_HYPNA</name>